<dbReference type="EMBL" id="L00036">
    <property type="protein sequence ID" value="AAA96683.1"/>
    <property type="molecule type" value="Genomic_DNA"/>
</dbReference>
<dbReference type="EMBL" id="X14112">
    <property type="protein sequence ID" value="CAA32282.1"/>
    <property type="molecule type" value="Genomic_DNA"/>
</dbReference>
<dbReference type="EMBL" id="X02138">
    <property type="protein sequence ID" value="CAA26059.1"/>
    <property type="molecule type" value="Genomic_DNA"/>
</dbReference>
<dbReference type="EMBL" id="AY240646">
    <property type="protein sequence ID" value="AAP39247.1"/>
    <property type="molecule type" value="Genomic_DNA"/>
</dbReference>
<dbReference type="EMBL" id="AY240647">
    <property type="protein sequence ID" value="AAP39250.1"/>
    <property type="molecule type" value="Genomic_DNA"/>
</dbReference>
<dbReference type="EMBL" id="AY240651">
    <property type="protein sequence ID" value="AAP39262.1"/>
    <property type="molecule type" value="Genomic_DNA"/>
</dbReference>
<dbReference type="EMBL" id="AY240655">
    <property type="protein sequence ID" value="AAP39274.1"/>
    <property type="molecule type" value="Genomic_DNA"/>
</dbReference>
<dbReference type="EMBL" id="AY240657">
    <property type="protein sequence ID" value="AAP39280.1"/>
    <property type="molecule type" value="Genomic_DNA"/>
</dbReference>
<dbReference type="EMBL" id="AY240658">
    <property type="protein sequence ID" value="AAP39283.1"/>
    <property type="molecule type" value="Genomic_DNA"/>
</dbReference>
<dbReference type="EMBL" id="AY240789">
    <property type="protein sequence ID" value="AAP39676.1"/>
    <property type="molecule type" value="Genomic_DNA"/>
</dbReference>
<dbReference type="EMBL" id="AY240790">
    <property type="protein sequence ID" value="AAP39679.1"/>
    <property type="molecule type" value="Genomic_DNA"/>
</dbReference>
<dbReference type="EMBL" id="AY240791">
    <property type="protein sequence ID" value="AAP39682.1"/>
    <property type="molecule type" value="Genomic_DNA"/>
</dbReference>
<dbReference type="EMBL" id="AY240794">
    <property type="protein sequence ID" value="AAP39691.1"/>
    <property type="molecule type" value="Genomic_DNA"/>
</dbReference>
<dbReference type="EMBL" id="AY240795">
    <property type="protein sequence ID" value="AAP39694.1"/>
    <property type="molecule type" value="Genomic_DNA"/>
</dbReference>
<dbReference type="EMBL" id="AY240796">
    <property type="protein sequence ID" value="AAP39697.1"/>
    <property type="molecule type" value="Genomic_DNA"/>
</dbReference>
<dbReference type="EMBL" id="AY240797">
    <property type="protein sequence ID" value="AAP39700.1"/>
    <property type="molecule type" value="Genomic_DNA"/>
</dbReference>
<dbReference type="EMBL" id="AY240800">
    <property type="protein sequence ID" value="AAP39709.1"/>
    <property type="molecule type" value="Genomic_DNA"/>
</dbReference>
<dbReference type="EMBL" id="AY240801">
    <property type="protein sequence ID" value="AAP39712.1"/>
    <property type="molecule type" value="Genomic_DNA"/>
</dbReference>
<dbReference type="EMBL" id="AY240802">
    <property type="protein sequence ID" value="AAP39715.1"/>
    <property type="molecule type" value="Genomic_DNA"/>
</dbReference>
<dbReference type="EMBL" id="AY240805">
    <property type="protein sequence ID" value="AAP39724.1"/>
    <property type="molecule type" value="Genomic_DNA"/>
</dbReference>
<dbReference type="EMBL" id="AY240806">
    <property type="protein sequence ID" value="AAP39727.1"/>
    <property type="molecule type" value="Genomic_DNA"/>
</dbReference>
<dbReference type="EMBL" id="AY240808">
    <property type="protein sequence ID" value="AAP39733.1"/>
    <property type="molecule type" value="Genomic_DNA"/>
</dbReference>
<dbReference type="EMBL" id="AY240809">
    <property type="protein sequence ID" value="AAP39736.1"/>
    <property type="molecule type" value="Genomic_DNA"/>
</dbReference>
<dbReference type="EMBL" id="AY240811">
    <property type="protein sequence ID" value="AAP39742.1"/>
    <property type="molecule type" value="Genomic_DNA"/>
</dbReference>
<dbReference type="EMBL" id="AY240812">
    <property type="protein sequence ID" value="AAP39745.1"/>
    <property type="molecule type" value="Genomic_DNA"/>
</dbReference>
<dbReference type="EMBL" id="AY240820">
    <property type="protein sequence ID" value="AAP39769.1"/>
    <property type="molecule type" value="Genomic_DNA"/>
</dbReference>
<dbReference type="EMBL" id="AY240821">
    <property type="protein sequence ID" value="AAP39772.1"/>
    <property type="molecule type" value="Genomic_DNA"/>
</dbReference>
<dbReference type="EMBL" id="AY240822">
    <property type="protein sequence ID" value="AAP39775.1"/>
    <property type="molecule type" value="Genomic_DNA"/>
</dbReference>
<dbReference type="EMBL" id="DQ889502">
    <property type="protein sequence ID" value="ABI63523.1"/>
    <property type="molecule type" value="Genomic_DNA"/>
</dbReference>
<dbReference type="EMBL" id="FJ593289">
    <property type="protein sequence ID" value="ACM62294.1"/>
    <property type="molecule type" value="Genomic_DNA"/>
</dbReference>
<dbReference type="PIR" id="A05240">
    <property type="entry name" value="QQBE75"/>
</dbReference>
<dbReference type="RefSeq" id="YP_009137140.1">
    <property type="nucleotide sequence ID" value="NC_001806.2"/>
</dbReference>
<dbReference type="SMR" id="P06480"/>
<dbReference type="ChEMBL" id="CHEMBL2364696"/>
<dbReference type="DrugCentral" id="P06480"/>
<dbReference type="GlyCosmos" id="P06480">
    <property type="glycosylation" value="1 site, No reported glycans"/>
</dbReference>
<dbReference type="DNASU" id="2703406"/>
<dbReference type="GeneID" id="2703406"/>
<dbReference type="KEGG" id="vg:2703406"/>
<dbReference type="PRO" id="PR:P06480"/>
<dbReference type="Proteomes" id="UP000009294">
    <property type="component" value="Segment"/>
</dbReference>
<dbReference type="Proteomes" id="UP000180652">
    <property type="component" value="Segment"/>
</dbReference>
<dbReference type="GO" id="GO:0044167">
    <property type="term" value="C:host cell endoplasmic reticulum membrane"/>
    <property type="evidence" value="ECO:0007669"/>
    <property type="project" value="UniProtKB-SubCell"/>
</dbReference>
<dbReference type="GO" id="GO:0044175">
    <property type="term" value="C:host cell endosome membrane"/>
    <property type="evidence" value="ECO:0007669"/>
    <property type="project" value="UniProtKB-SubCell"/>
</dbReference>
<dbReference type="GO" id="GO:0044178">
    <property type="term" value="C:host cell Golgi membrane"/>
    <property type="evidence" value="ECO:0007669"/>
    <property type="project" value="UniProtKB-SubCell"/>
</dbReference>
<dbReference type="GO" id="GO:0016020">
    <property type="term" value="C:membrane"/>
    <property type="evidence" value="ECO:0007669"/>
    <property type="project" value="UniProtKB-KW"/>
</dbReference>
<dbReference type="InterPro" id="IPR004913">
    <property type="entry name" value="Herpes_gJ"/>
</dbReference>
<dbReference type="Pfam" id="PF03229">
    <property type="entry name" value="Alpha_GJ"/>
    <property type="match status" value="1"/>
</dbReference>
<organismHost>
    <name type="scientific">Homo sapiens</name>
    <name type="common">Human</name>
    <dbReference type="NCBI Taxonomy" id="9606"/>
</organismHost>
<protein>
    <recommendedName>
        <fullName>Envelope glycoprotein J</fullName>
    </recommendedName>
</protein>
<name>GJ_HHV11</name>
<keyword id="KW-0325">Glycoprotein</keyword>
<keyword id="KW-1038">Host endoplasmic reticulum</keyword>
<keyword id="KW-1039">Host endosome</keyword>
<keyword id="KW-1040">Host Golgi apparatus</keyword>
<keyword id="KW-1043">Host membrane</keyword>
<keyword id="KW-0472">Membrane</keyword>
<keyword id="KW-1185">Reference proteome</keyword>
<keyword id="KW-0732">Signal</keyword>
<keyword id="KW-0812">Transmembrane</keyword>
<keyword id="KW-1133">Transmembrane helix</keyword>
<gene>
    <name type="primary">gJ</name>
    <name type="ORF">US5</name>
</gene>
<accession>P06480</accession>
<accession>Q771F7</accession>
<organism>
    <name type="scientific">Human herpesvirus 1 (strain 17)</name>
    <name type="common">HHV-1</name>
    <name type="synonym">Human herpes simplex virus 1</name>
    <dbReference type="NCBI Taxonomy" id="10299"/>
    <lineage>
        <taxon>Viruses</taxon>
        <taxon>Duplodnaviria</taxon>
        <taxon>Heunggongvirae</taxon>
        <taxon>Peploviricota</taxon>
        <taxon>Herviviricetes</taxon>
        <taxon>Herpesvirales</taxon>
        <taxon>Orthoherpesviridae</taxon>
        <taxon>Alphaherpesvirinae</taxon>
        <taxon>Simplexvirus</taxon>
        <taxon>Simplexvirus humanalpha1</taxon>
        <taxon>Human herpesvirus 1</taxon>
    </lineage>
</organism>
<reference key="1">
    <citation type="journal article" date="1985" name="J. Mol. Biol.">
        <title>Sequence determination and genetic content of the short unique region in the genome of herpes simplex virus type 1.</title>
        <authorList>
            <person name="McGeoch D.J."/>
            <person name="Dolan A."/>
            <person name="Donald S."/>
            <person name="Rixon F.J."/>
        </authorList>
    </citation>
    <scope>NUCLEOTIDE SEQUENCE [GENOMIC DNA]</scope>
</reference>
<reference key="2">
    <citation type="journal article" date="1988" name="J. Gen. Virol.">
        <title>The complete DNA sequence of the long unique region in the genome of herpes simplex virus type 1.</title>
        <authorList>
            <person name="McGeoch D.J."/>
            <person name="Dalrymple M.A."/>
            <person name="Davison A.J."/>
            <person name="Dolan A."/>
            <person name="Frame M.C."/>
            <person name="McNab D."/>
            <person name="Perry L.J."/>
            <person name="Scott J.E."/>
            <person name="Taylor P."/>
        </authorList>
    </citation>
    <scope>NUCLEOTIDE SEQUENCE [LARGE SCALE GENOMIC DNA]</scope>
</reference>
<reference key="3">
    <citation type="submission" date="2003-02" db="EMBL/GenBank/DDBJ databases">
        <authorList>
            <person name="Bowden R.J."/>
        </authorList>
    </citation>
    <scope>NUCLEOTIDE SEQUENCE [GENOMIC DNA]</scope>
    <source>
        <strain>Isolate P01</strain>
        <strain>Isolate P02</strain>
        <strain>Isolate P06</strain>
        <strain>Isolate P10</strain>
        <strain>Isolate P12</strain>
        <strain>Isolate P13</strain>
        <strain>Isolate SG007</strain>
        <strain>Isolate SG009</strain>
        <strain>Isolate SG010</strain>
        <strain>Isolate SK005</strain>
        <strain>Isolate SK007</strain>
        <strain>Isolate SK008</strain>
        <strain>Isolate SK012</strain>
        <strain>Isolate SK013</strain>
        <strain>Isolate SK015</strain>
        <strain>Isolate SK019</strain>
        <strain>Isolate SK020</strain>
        <strain>Isolate SK024</strain>
        <strain>Isolate SK025</strain>
        <strain>Isolate SK081</strain>
        <strain>Isolate SK095</strain>
        <strain>Isolate SK096</strain>
        <strain>Isolate SK097</strain>
        <strain>SK006</strain>
        <strain>SK027</strain>
    </source>
</reference>
<reference key="4">
    <citation type="journal article" date="2006" name="Infect. Genet. Evol.">
        <title>Patterns of Eurasian HSV-1 molecular diversity and inferences of human migrations.</title>
        <authorList>
            <person name="Bowden R."/>
            <person name="Sakaoka H."/>
            <person name="Ward R."/>
            <person name="Donnelly P."/>
        </authorList>
    </citation>
    <scope>NUCLEOTIDE SEQUENCE [GENOMIC DNA]</scope>
    <source>
        <strain>Isolate P01</strain>
        <strain>Isolate P02</strain>
        <strain>Isolate P06</strain>
        <strain>Isolate P10</strain>
        <strain>Isolate P12</strain>
        <strain>Isolate P13</strain>
        <strain>Isolate SG007</strain>
        <strain>Isolate SG009</strain>
        <strain>Isolate SG010</strain>
        <strain>Isolate SK005</strain>
        <strain>Isolate SK006</strain>
        <strain>Isolate SK007</strain>
        <strain>Isolate SK008</strain>
        <strain>Isolate SK012</strain>
        <strain>Isolate SK013</strain>
        <strain>Isolate SK015</strain>
        <strain>Isolate SK019</strain>
        <strain>Isolate SK020</strain>
        <strain>Isolate SK024</strain>
        <strain>Isolate SK025</strain>
        <strain>Isolate SK027</strain>
        <strain>Isolate SK081</strain>
        <strain>Isolate SK095</strain>
        <strain>Isolate SK096</strain>
        <strain>Isolate SK097</strain>
    </source>
</reference>
<reference key="5">
    <citation type="journal article" date="2007" name="Microbes Infect.">
        <title>Determination and analysis of the DNA sequence of highly attenuated herpes simplex virus type 1 mutant HF10, a potential oncolytic virus.</title>
        <authorList>
            <person name="Ushijima Y."/>
            <person name="Luo C."/>
            <person name="Goshima F."/>
            <person name="Yamauchi Y."/>
            <person name="Kimura H."/>
            <person name="Nishiyama Y."/>
        </authorList>
    </citation>
    <scope>NUCLEOTIDE SEQUENCE [LARGE SCALE GENOMIC DNA]</scope>
    <source>
        <strain>Nonneuroinvasive mutant HF10</strain>
    </source>
</reference>
<reference key="6">
    <citation type="submission" date="2008-12" db="EMBL/GenBank/DDBJ databases">
        <title>Herpes simplex virus type 1 bacterial artificial chromosome.</title>
        <authorList>
            <person name="Cunningham C."/>
            <person name="Davison A.J."/>
        </authorList>
    </citation>
    <scope>NUCLEOTIDE SEQUENCE [LARGE SCALE GENOMIC DNA]</scope>
    <source>
        <strain>17 syn+</strain>
    </source>
</reference>
<reference key="7">
    <citation type="journal article" date="2008" name="J. Virol.">
        <title>The antiapoptotic herpes simplex virus glycoprotein J localizes to multiple cellular organelles and induces reactive oxygen species formation.</title>
        <authorList>
            <person name="Aubert M."/>
            <person name="Chen Z."/>
            <person name="Lang R."/>
            <person name="Dang C.H."/>
            <person name="Fowler C."/>
            <person name="Sloan D.D."/>
            <person name="Jerome K.R."/>
        </authorList>
    </citation>
    <scope>FUNCTION</scope>
    <scope>SUBCELLULAR LOCATION</scope>
    <source>
        <strain>F</strain>
    </source>
</reference>
<reference key="8">
    <citation type="journal article" date="2008" name="J. Virol.">
        <title>Comprehensive characterization of extracellular herpes simplex virus type 1 virions.</title>
        <authorList>
            <person name="Loret S."/>
            <person name="Guay G."/>
            <person name="Lippe R."/>
        </authorList>
    </citation>
    <scope>SUBCELLULAR LOCATION</scope>
    <source>
        <strain>F</strain>
    </source>
</reference>
<evidence type="ECO:0000255" key="1"/>
<evidence type="ECO:0000269" key="2">
    <source>
    </source>
</evidence>
<evidence type="ECO:0000305" key="3"/>
<proteinExistence type="inferred from homology"/>
<comment type="function">
    <text evidence="2">Inhibits host cell apoptosis. Induces an increase in reactive oxygen species (ROS) in the host cell.</text>
</comment>
<comment type="subcellular location">
    <subcellularLocation>
        <location evidence="3">Host Golgi apparatus membrane</location>
        <topology evidence="3">Single-pass type I membrane protein</topology>
    </subcellularLocation>
    <subcellularLocation>
        <location evidence="3">Host endoplasmic reticulum membrane</location>
        <topology evidence="3">Single-pass type I membrane protein</topology>
    </subcellularLocation>
    <subcellularLocation>
        <location evidence="3">Host endosome membrane</location>
        <topology evidence="3">Single-pass type I membrane protein</topology>
    </subcellularLocation>
</comment>
<comment type="similarity">
    <text evidence="3">Belongs to the alphaherpesvirinae glycoprotein J family.</text>
</comment>
<sequence length="92" mass="9556">MSLRAVWHLGLLGSLVGAVLAATHRGPAANTTDPLTHAPVSPHPSPLGGFAVPLVVGGLCAVVLGAACLLELLRRTCRGWGRYHPYMDPVVV</sequence>
<feature type="signal peptide" evidence="1">
    <location>
        <begin position="1"/>
        <end position="21"/>
    </location>
</feature>
<feature type="chain" id="PRO_0000115789" description="Envelope glycoprotein J">
    <location>
        <begin position="22"/>
        <end position="92"/>
    </location>
</feature>
<feature type="topological domain" description="Extracellular" evidence="1">
    <location>
        <begin position="22"/>
        <end position="49"/>
    </location>
</feature>
<feature type="transmembrane region" description="Helical" evidence="1">
    <location>
        <begin position="50"/>
        <end position="70"/>
    </location>
</feature>
<feature type="topological domain" description="Cytoplasmic" evidence="1">
    <location>
        <begin position="71"/>
        <end position="92"/>
    </location>
</feature>
<feature type="glycosylation site" description="N-linked (GlcNAc...) asparagine; by host" evidence="1">
    <location>
        <position position="30"/>
    </location>
</feature>